<gene>
    <name evidence="7" type="primary">LECRKS7</name>
    <name evidence="8" type="synonym">DAF1</name>
    <name evidence="10" type="ordered locus">Os02g0459600</name>
    <name evidence="9" type="ordered locus">LOC_Os02g26160</name>
</gene>
<sequence>MPPRCRRLPLLFILLLAVRPLSAAAASSIAAAPASSYRRISWASNLTLLGSASLLPGAAGVALTTPSRDGVGAGRALFSEPVRLLLPQDAAASASASRAATPASFSTRFTFRITPSPTYGDGLAFLLTSSRTFLGASNGFLGLFPSSSASDEGELRDVSTVAVEIDTHLDVALHDPDGNHVALDAGSIFSVASAQPGVDLKAGVPITAWVEYRAPRRRLNVWLSYSPSRRPEKPALSADVDLSGLLRTYMYAGFSASNGNGAALHVVERWTFRTFGFPNSSYAPPPTKYIGPMPPNNQPLPPPPSPSPSPPPPSPPPPPHPNHRRRHLFYKVLGGVLGGMVLLGLVVVGSAVLLGRSVRRKNQEHAVASEDMGEATLSMEVARAATKGFDSGNVIGVGGSGATVYEGVLPSGSRVAVKRFQAIGSCTKAFDSELKAMLNCPHHPNLVPLAGWCRSKDELVLVYEFMPNGNLDSALHTLGGATLPWEARFRAVYGVASALAYLHDECENRIIHRDVKSSNVMLDAEFNARLGDFGLARTVSHGGLPLTTQPAGTLGYLAPEYVHTGVATERSDVYSFGVLALEVATGRRPAERGISVVNWVWTLWGRRRLVDAADRRLQGRFVADEMRRVLLVGLCCVHPDCRKRPGMRRVVSMLDGTAPLILVPDKMPPVLLQPVPNASSMNSADTANTAFFSCR</sequence>
<organism>
    <name type="scientific">Oryza sativa subsp. japonica</name>
    <name type="common">Rice</name>
    <dbReference type="NCBI Taxonomy" id="39947"/>
    <lineage>
        <taxon>Eukaryota</taxon>
        <taxon>Viridiplantae</taxon>
        <taxon>Streptophyta</taxon>
        <taxon>Embryophyta</taxon>
        <taxon>Tracheophyta</taxon>
        <taxon>Spermatophyta</taxon>
        <taxon>Magnoliopsida</taxon>
        <taxon>Liliopsida</taxon>
        <taxon>Poales</taxon>
        <taxon>Poaceae</taxon>
        <taxon>BOP clade</taxon>
        <taxon>Oryzoideae</taxon>
        <taxon>Oryzeae</taxon>
        <taxon>Oryzinae</taxon>
        <taxon>Oryza</taxon>
        <taxon>Oryza sativa</taxon>
    </lineage>
</organism>
<keyword id="KW-0067">ATP-binding</keyword>
<keyword id="KW-1003">Cell membrane</keyword>
<keyword id="KW-0963">Cytoplasm</keyword>
<keyword id="KW-0325">Glycoprotein</keyword>
<keyword id="KW-0418">Kinase</keyword>
<keyword id="KW-0430">Lectin</keyword>
<keyword id="KW-0472">Membrane</keyword>
<keyword id="KW-0547">Nucleotide-binding</keyword>
<keyword id="KW-0597">Phosphoprotein</keyword>
<keyword id="KW-1185">Reference proteome</keyword>
<keyword id="KW-0723">Serine/threonine-protein kinase</keyword>
<keyword id="KW-0732">Signal</keyword>
<keyword id="KW-0808">Transferase</keyword>
<keyword id="KW-0812">Transmembrane</keyword>
<keyword id="KW-1133">Transmembrane helix</keyword>
<evidence type="ECO:0000255" key="1"/>
<evidence type="ECO:0000255" key="2">
    <source>
        <dbReference type="PROSITE-ProRule" id="PRU00159"/>
    </source>
</evidence>
<evidence type="ECO:0000255" key="3">
    <source>
        <dbReference type="PROSITE-ProRule" id="PRU00498"/>
    </source>
</evidence>
<evidence type="ECO:0000256" key="4">
    <source>
        <dbReference type="SAM" id="MobiDB-lite"/>
    </source>
</evidence>
<evidence type="ECO:0000269" key="5">
    <source>
    </source>
</evidence>
<evidence type="ECO:0000269" key="6">
    <source>
    </source>
</evidence>
<evidence type="ECO:0000303" key="7">
    <source>
    </source>
</evidence>
<evidence type="ECO:0000303" key="8">
    <source>
    </source>
</evidence>
<evidence type="ECO:0000305" key="9"/>
<evidence type="ECO:0000312" key="10">
    <source>
        <dbReference type="EMBL" id="BAS78542.1"/>
    </source>
</evidence>
<feature type="signal peptide" evidence="1">
    <location>
        <begin position="1"/>
        <end position="23"/>
    </location>
</feature>
<feature type="chain" id="PRO_5006056350" description="L-type lectin-domain containing receptor kinase S.7">
    <location>
        <begin position="24"/>
        <end position="695"/>
    </location>
</feature>
<feature type="topological domain" description="Extracellular" evidence="9">
    <location>
        <begin position="24"/>
        <end position="331"/>
    </location>
</feature>
<feature type="transmembrane region" description="Helical" evidence="1">
    <location>
        <begin position="332"/>
        <end position="352"/>
    </location>
</feature>
<feature type="topological domain" description="Cytoplasmic" evidence="9">
    <location>
        <begin position="353"/>
        <end position="695"/>
    </location>
</feature>
<feature type="domain" description="Protein kinase" evidence="2">
    <location>
        <begin position="389"/>
        <end position="661"/>
    </location>
</feature>
<feature type="region of interest" description="Legume-lectin like" evidence="1">
    <location>
        <begin position="37"/>
        <end position="276"/>
    </location>
</feature>
<feature type="region of interest" description="Disordered" evidence="4">
    <location>
        <begin position="286"/>
        <end position="323"/>
    </location>
</feature>
<feature type="compositionally biased region" description="Pro residues" evidence="4">
    <location>
        <begin position="286"/>
        <end position="320"/>
    </location>
</feature>
<feature type="active site" description="Proton acceptor" evidence="2">
    <location>
        <position position="514"/>
    </location>
</feature>
<feature type="binding site" evidence="2">
    <location>
        <begin position="395"/>
        <end position="403"/>
    </location>
    <ligand>
        <name>ATP</name>
        <dbReference type="ChEBI" id="CHEBI:30616"/>
    </ligand>
</feature>
<feature type="binding site" evidence="2">
    <location>
        <position position="418"/>
    </location>
    <ligand>
        <name>ATP</name>
        <dbReference type="ChEBI" id="CHEBI:30616"/>
    </ligand>
</feature>
<feature type="modified residue" description="Phosphothreonine" evidence="5">
    <location>
        <position position="376"/>
    </location>
</feature>
<feature type="modified residue" description="Phosphoserine" evidence="5">
    <location>
        <position position="378"/>
    </location>
</feature>
<feature type="modified residue" description="Phosphothreonine" evidence="5">
    <location>
        <position position="386"/>
    </location>
</feature>
<feature type="modified residue" description="Phosphothreonine" evidence="5">
    <location>
        <position position="403"/>
    </location>
</feature>
<feature type="modified residue" description="Phosphothreonine" evidence="5">
    <location>
        <position position="657"/>
    </location>
</feature>
<feature type="glycosylation site" description="N-linked (GlcNAc...) asparagine" evidence="3">
    <location>
        <position position="45"/>
    </location>
</feature>
<feature type="glycosylation site" description="N-linked (GlcNAc...) asparagine" evidence="3">
    <location>
        <position position="279"/>
    </location>
</feature>
<feature type="mutagenesis site" description="Loss of kinase activity." evidence="5">
    <original>K</original>
    <variation>E</variation>
    <location>
        <position position="418"/>
    </location>
</feature>
<feature type="mutagenesis site" description="In s13283; loss of kinase activity and male sterile phenotype." evidence="5">
    <original>E</original>
    <variation>K</variation>
    <location>
        <position position="560"/>
    </location>
</feature>
<reference key="1">
    <citation type="journal article" date="2005" name="Nature">
        <title>The map-based sequence of the rice genome.</title>
        <authorList>
            <consortium name="International rice genome sequencing project (IRGSP)"/>
        </authorList>
    </citation>
    <scope>NUCLEOTIDE SEQUENCE [LARGE SCALE GENOMIC DNA]</scope>
    <source>
        <strain>cv. Nipponbare</strain>
    </source>
</reference>
<reference key="2">
    <citation type="journal article" date="2008" name="Nucleic Acids Res.">
        <title>The rice annotation project database (RAP-DB): 2008 update.</title>
        <authorList>
            <consortium name="The rice annotation project (RAP)"/>
        </authorList>
    </citation>
    <scope>GENOME REANNOTATION</scope>
    <source>
        <strain>cv. Nipponbare</strain>
    </source>
</reference>
<reference key="3">
    <citation type="journal article" date="2013" name="Rice">
        <title>Improvement of the Oryza sativa Nipponbare reference genome using next generation sequence and optical map data.</title>
        <authorList>
            <person name="Kawahara Y."/>
            <person name="de la Bastide M."/>
            <person name="Hamilton J.P."/>
            <person name="Kanamori H."/>
            <person name="McCombie W.R."/>
            <person name="Ouyang S."/>
            <person name="Schwartz D.C."/>
            <person name="Tanaka T."/>
            <person name="Wu J."/>
            <person name="Zhou S."/>
            <person name="Childs K.L."/>
            <person name="Davidson R.M."/>
            <person name="Lin H."/>
            <person name="Quesada-Ocampo L."/>
            <person name="Vaillancourt B."/>
            <person name="Sakai H."/>
            <person name="Lee S.S."/>
            <person name="Kim J."/>
            <person name="Numa H."/>
            <person name="Itoh T."/>
            <person name="Buell C.R."/>
            <person name="Matsumoto T."/>
        </authorList>
    </citation>
    <scope>GENOME REANNOTATION</scope>
    <source>
        <strain>cv. Nipponbare</strain>
    </source>
</reference>
<reference key="4">
    <citation type="journal article" date="2020" name="J. Integr. Plant Biol.">
        <title>Lectin receptor kinase OsLecRK-S.7 is required for pollen development and male fertility.</title>
        <authorList>
            <person name="Peng X."/>
            <person name="Wang M."/>
            <person name="Li Y."/>
            <person name="Yan W."/>
            <person name="Chang Z."/>
            <person name="Chen Z."/>
            <person name="Xu C."/>
            <person name="Yang C."/>
            <person name="Deng X.W."/>
            <person name="Wu J."/>
            <person name="Tang X."/>
        </authorList>
    </citation>
    <scope>FUNCTION</scope>
    <scope>SUBCELLULAR LOCATION</scope>
    <scope>TISSUE SPECIFICITY</scope>
    <scope>PHOSPHORYLATION AT THR-376; SER-378; THR-386; THR-403 AND THR-657</scope>
    <scope>DISRUPTION PHENOTYPE</scope>
    <scope>MUTAGENESIS OF LYS-418 AND GLU-560</scope>
</reference>
<reference key="5">
    <citation type="journal article" date="2020" name="Nat. Plants">
        <title>Rice pollen aperture formation is regulated by the interplay between OsINP1 and OsDAF1.</title>
        <authorList>
            <person name="Zhang X."/>
            <person name="Zhao G."/>
            <person name="Tan Q."/>
            <person name="Yuan H."/>
            <person name="Betts N."/>
            <person name="Zhu L."/>
            <person name="Zhang D."/>
            <person name="Liang W."/>
        </authorList>
    </citation>
    <scope>FUNCTION</scope>
    <scope>INTERACTION WITH INP1</scope>
    <scope>DISRUPTION PHENOTYPE</scope>
</reference>
<dbReference type="EC" id="2.7.11.1" evidence="5"/>
<dbReference type="EMBL" id="AP005650">
    <property type="protein sequence ID" value="BAD19984.1"/>
    <property type="status" value="ALT_SEQ"/>
    <property type="molecule type" value="Genomic_DNA"/>
</dbReference>
<dbReference type="EMBL" id="AP008208">
    <property type="protein sequence ID" value="BAF08699.2"/>
    <property type="status" value="ALT_INIT"/>
    <property type="molecule type" value="Genomic_DNA"/>
</dbReference>
<dbReference type="EMBL" id="AP014958">
    <property type="protein sequence ID" value="BAS78542.1"/>
    <property type="molecule type" value="Genomic_DNA"/>
</dbReference>
<dbReference type="RefSeq" id="XP_015624294.1">
    <property type="nucleotide sequence ID" value="XM_015768808.1"/>
</dbReference>
<dbReference type="RefSeq" id="XP_015624296.1">
    <property type="nucleotide sequence ID" value="XM_015768810.1"/>
</dbReference>
<dbReference type="SMR" id="A0A0P0VIP0"/>
<dbReference type="FunCoup" id="A0A0P0VIP0">
    <property type="interactions" value="134"/>
</dbReference>
<dbReference type="STRING" id="39947.A0A0P0VIP0"/>
<dbReference type="GlyCosmos" id="A0A0P0VIP0">
    <property type="glycosylation" value="2 sites, No reported glycans"/>
</dbReference>
<dbReference type="iPTMnet" id="A0A0P0VIP0"/>
<dbReference type="PaxDb" id="39947-A0A0P0VIP0"/>
<dbReference type="EnsemblPlants" id="Os02t0459600-01">
    <property type="protein sequence ID" value="Os02t0459600-01"/>
    <property type="gene ID" value="Os02g0459600"/>
</dbReference>
<dbReference type="Gramene" id="Os02t0459600-01">
    <property type="protein sequence ID" value="Os02t0459600-01"/>
    <property type="gene ID" value="Os02g0459600"/>
</dbReference>
<dbReference type="KEGG" id="dosa:Os02g0459600"/>
<dbReference type="eggNOG" id="KOG1187">
    <property type="taxonomic scope" value="Eukaryota"/>
</dbReference>
<dbReference type="HOGENOM" id="CLU_000288_62_6_1"/>
<dbReference type="InParanoid" id="A0A0P0VIP0"/>
<dbReference type="OMA" id="ATMVGCL"/>
<dbReference type="OrthoDB" id="1856421at2759"/>
<dbReference type="Proteomes" id="UP000000763">
    <property type="component" value="Chromosome 2"/>
</dbReference>
<dbReference type="Proteomes" id="UP000059680">
    <property type="component" value="Chromosome 2"/>
</dbReference>
<dbReference type="GO" id="GO:0005829">
    <property type="term" value="C:cytosol"/>
    <property type="evidence" value="ECO:0000314"/>
    <property type="project" value="UniProtKB"/>
</dbReference>
<dbReference type="GO" id="GO:0005886">
    <property type="term" value="C:plasma membrane"/>
    <property type="evidence" value="ECO:0000314"/>
    <property type="project" value="UniProtKB"/>
</dbReference>
<dbReference type="GO" id="GO:0062074">
    <property type="term" value="C:pollen aperture"/>
    <property type="evidence" value="ECO:0000314"/>
    <property type="project" value="UniProtKB"/>
</dbReference>
<dbReference type="GO" id="GO:0005524">
    <property type="term" value="F:ATP binding"/>
    <property type="evidence" value="ECO:0007669"/>
    <property type="project" value="UniProtKB-KW"/>
</dbReference>
<dbReference type="GO" id="GO:0030246">
    <property type="term" value="F:carbohydrate binding"/>
    <property type="evidence" value="ECO:0007669"/>
    <property type="project" value="UniProtKB-KW"/>
</dbReference>
<dbReference type="GO" id="GO:0016301">
    <property type="term" value="F:kinase activity"/>
    <property type="evidence" value="ECO:0000314"/>
    <property type="project" value="UniProtKB"/>
</dbReference>
<dbReference type="GO" id="GO:0004674">
    <property type="term" value="F:protein serine/threonine kinase activity"/>
    <property type="evidence" value="ECO:0007669"/>
    <property type="project" value="UniProtKB-KW"/>
</dbReference>
<dbReference type="GO" id="GO:0062075">
    <property type="term" value="P:pollen aperture formation"/>
    <property type="evidence" value="ECO:0000315"/>
    <property type="project" value="UniProtKB"/>
</dbReference>
<dbReference type="GO" id="GO:0009555">
    <property type="term" value="P:pollen development"/>
    <property type="evidence" value="ECO:0000315"/>
    <property type="project" value="UniProtKB"/>
</dbReference>
<dbReference type="GO" id="GO:0046777">
    <property type="term" value="P:protein autophosphorylation"/>
    <property type="evidence" value="ECO:0000314"/>
    <property type="project" value="UniProtKB"/>
</dbReference>
<dbReference type="CDD" id="cd06899">
    <property type="entry name" value="lectin_legume_LecRK_Arcelin_ConA"/>
    <property type="match status" value="1"/>
</dbReference>
<dbReference type="FunFam" id="2.60.120.200:FF:000241">
    <property type="entry name" value="L-type lectin-domain containing receptor kinase S.6-like"/>
    <property type="match status" value="1"/>
</dbReference>
<dbReference type="FunFam" id="3.30.200.20:FF:000773">
    <property type="entry name" value="L-type lectin-domain containing receptor kinase S.6-like"/>
    <property type="match status" value="1"/>
</dbReference>
<dbReference type="FunFam" id="1.10.510.10:FF:000342">
    <property type="entry name" value="L-type lectin-domain containing receptor kinase VIII.1"/>
    <property type="match status" value="1"/>
</dbReference>
<dbReference type="Gene3D" id="2.60.120.200">
    <property type="match status" value="1"/>
</dbReference>
<dbReference type="Gene3D" id="3.30.200.20">
    <property type="entry name" value="Phosphorylase Kinase, domain 1"/>
    <property type="match status" value="1"/>
</dbReference>
<dbReference type="Gene3D" id="1.10.510.10">
    <property type="entry name" value="Transferase(Phosphotransferase) domain 1"/>
    <property type="match status" value="1"/>
</dbReference>
<dbReference type="InterPro" id="IPR013320">
    <property type="entry name" value="ConA-like_dom_sf"/>
</dbReference>
<dbReference type="InterPro" id="IPR011009">
    <property type="entry name" value="Kinase-like_dom_sf"/>
</dbReference>
<dbReference type="InterPro" id="IPR050528">
    <property type="entry name" value="L-type_Lectin-RKs"/>
</dbReference>
<dbReference type="InterPro" id="IPR001220">
    <property type="entry name" value="Legume_lectin_dom"/>
</dbReference>
<dbReference type="InterPro" id="IPR000719">
    <property type="entry name" value="Prot_kinase_dom"/>
</dbReference>
<dbReference type="InterPro" id="IPR008271">
    <property type="entry name" value="Ser/Thr_kinase_AS"/>
</dbReference>
<dbReference type="PANTHER" id="PTHR27007">
    <property type="match status" value="1"/>
</dbReference>
<dbReference type="Pfam" id="PF00139">
    <property type="entry name" value="Lectin_legB"/>
    <property type="match status" value="1"/>
</dbReference>
<dbReference type="Pfam" id="PF00069">
    <property type="entry name" value="Pkinase"/>
    <property type="match status" value="1"/>
</dbReference>
<dbReference type="SMART" id="SM00220">
    <property type="entry name" value="S_TKc"/>
    <property type="match status" value="1"/>
</dbReference>
<dbReference type="SUPFAM" id="SSF49899">
    <property type="entry name" value="Concanavalin A-like lectins/glucanases"/>
    <property type="match status" value="1"/>
</dbReference>
<dbReference type="SUPFAM" id="SSF56112">
    <property type="entry name" value="Protein kinase-like (PK-like)"/>
    <property type="match status" value="1"/>
</dbReference>
<dbReference type="PROSITE" id="PS00307">
    <property type="entry name" value="LECTIN_LEGUME_BETA"/>
    <property type="match status" value="1"/>
</dbReference>
<dbReference type="PROSITE" id="PS50011">
    <property type="entry name" value="PROTEIN_KINASE_DOM"/>
    <property type="match status" value="1"/>
</dbReference>
<dbReference type="PROSITE" id="PS00108">
    <property type="entry name" value="PROTEIN_KINASE_ST"/>
    <property type="match status" value="1"/>
</dbReference>
<comment type="function">
    <text evidence="5 6">Legume-lectin receptor-like kinase required for normal pollen development and male fertility (PubMed:31833176, PubMed:32284546). Regulates pollen exine assembly and aperture development (PubMed:31833176, PubMed:32284546). Plays a critical role in annulus formation, and may participate in the formation of the fibrillar-granular layer underneath the operculum (PubMed:32284546). May function by regulating the expression of genes involved in pollen exine development (PubMed:31833176). Kinase activity is required for its function in pollen development (PubMed:31833176).</text>
</comment>
<comment type="catalytic activity">
    <reaction evidence="5">
        <text>L-seryl-[protein] + ATP = O-phospho-L-seryl-[protein] + ADP + H(+)</text>
        <dbReference type="Rhea" id="RHEA:17989"/>
        <dbReference type="Rhea" id="RHEA-COMP:9863"/>
        <dbReference type="Rhea" id="RHEA-COMP:11604"/>
        <dbReference type="ChEBI" id="CHEBI:15378"/>
        <dbReference type="ChEBI" id="CHEBI:29999"/>
        <dbReference type="ChEBI" id="CHEBI:30616"/>
        <dbReference type="ChEBI" id="CHEBI:83421"/>
        <dbReference type="ChEBI" id="CHEBI:456216"/>
        <dbReference type="EC" id="2.7.11.1"/>
    </reaction>
    <physiologicalReaction direction="left-to-right" evidence="5">
        <dbReference type="Rhea" id="RHEA:17990"/>
    </physiologicalReaction>
</comment>
<comment type="catalytic activity">
    <reaction evidence="5">
        <text>L-threonyl-[protein] + ATP = O-phospho-L-threonyl-[protein] + ADP + H(+)</text>
        <dbReference type="Rhea" id="RHEA:46608"/>
        <dbReference type="Rhea" id="RHEA-COMP:11060"/>
        <dbReference type="Rhea" id="RHEA-COMP:11605"/>
        <dbReference type="ChEBI" id="CHEBI:15378"/>
        <dbReference type="ChEBI" id="CHEBI:30013"/>
        <dbReference type="ChEBI" id="CHEBI:30616"/>
        <dbReference type="ChEBI" id="CHEBI:61977"/>
        <dbReference type="ChEBI" id="CHEBI:456216"/>
        <dbReference type="EC" id="2.7.11.1"/>
    </reaction>
    <physiologicalReaction direction="left-to-right" evidence="5">
        <dbReference type="Rhea" id="RHEA:46609"/>
    </physiologicalReaction>
</comment>
<comment type="subunit">
    <text evidence="6">Interacts with INP1 (PubMed:32284546). Interaction with INP1 is required for DAF1 polar localization at the future aperture sites in tetrads (PubMed:32284546).</text>
</comment>
<comment type="subcellular location">
    <subcellularLocation>
        <location evidence="5 6">Cell membrane</location>
        <topology evidence="1">Single-pass type I membrane protein</topology>
    </subcellularLocation>
    <subcellularLocation>
        <location evidence="6">Cytoplasm</location>
        <location evidence="6">Cytosol</location>
    </subcellularLocation>
    <text evidence="6">During meiosis, localizes diffusely in the cytosol and plasma membrane of microspore mother cells (MMCs). During tetrad development, localizes at the corners. At late tetrad stage, accumulates to the four corners of the tetrad, assembled into ring-like structures marking future aperture sites. When microspores are released from tetrads and preliminary aperture structures has formed, remains in a distinctly ring-shaped distribution beneath the aperture in the plasma membrane between the annulus and operculum.</text>
</comment>
<comment type="tissue specificity">
    <text evidence="5">Expressed in roots, leaves, lemma, palea, pistil and anthers.</text>
</comment>
<comment type="PTM">
    <text evidence="5">Autophosphorylated at Thr-376; Ser-378; Thr-386; Thr-403 and Thr-657.</text>
</comment>
<comment type="disruption phenotype">
    <text evidence="6">Male sterility due to aborted pollen grains with abnormal exine an intine, and defective aperture (PubMed:32284546). Aborted pollen grains with defective apertures and intine formation, and male sterility (PubMed:32284546).</text>
</comment>
<comment type="similarity">
    <text evidence="9">In the N-terminal section; belongs to the leguminous lectin family.</text>
</comment>
<comment type="similarity">
    <text evidence="9">In the C-terminal section; belongs to the protein kinase superfamily. Ser/Thr protein kinase family.</text>
</comment>
<comment type="sequence caution" evidence="9">
    <conflict type="erroneous gene model prediction">
        <sequence resource="EMBL-CDS" id="BAD19984"/>
    </conflict>
</comment>
<comment type="sequence caution" evidence="9">
    <conflict type="erroneous initiation">
        <sequence resource="EMBL-CDS" id="BAF08699"/>
    </conflict>
    <text>Extended N-terminus.</text>
</comment>
<proteinExistence type="evidence at protein level"/>
<protein>
    <recommendedName>
        <fullName evidence="9">L-type lectin-domain containing receptor kinase S.7</fullName>
        <shortName evidence="7">OsLecRK-S.7</shortName>
        <ecNumber evidence="5">2.7.11.1</ecNumber>
    </recommendedName>
    <alternativeName>
        <fullName evidence="8">Protein DEFECTIVE IN APERTURE FORMATION 1</fullName>
        <shortName evidence="8">OsDAF1</shortName>
    </alternativeName>
</protein>
<accession>A0A0P0VIP0</accession>
<accession>Q0E1D9</accession>
<accession>Q6K3K2</accession>
<name>LRSK7_ORYSJ</name>